<organism>
    <name type="scientific">Phaseolus vulgaris</name>
    <name type="common">Kidney bean</name>
    <name type="synonym">French bean</name>
    <dbReference type="NCBI Taxonomy" id="3885"/>
    <lineage>
        <taxon>Eukaryota</taxon>
        <taxon>Viridiplantae</taxon>
        <taxon>Streptophyta</taxon>
        <taxon>Embryophyta</taxon>
        <taxon>Tracheophyta</taxon>
        <taxon>Spermatophyta</taxon>
        <taxon>Magnoliopsida</taxon>
        <taxon>eudicotyledons</taxon>
        <taxon>Gunneridae</taxon>
        <taxon>Pentapetalae</taxon>
        <taxon>rosids</taxon>
        <taxon>fabids</taxon>
        <taxon>Fabales</taxon>
        <taxon>Fabaceae</taxon>
        <taxon>Papilionoideae</taxon>
        <taxon>50 kb inversion clade</taxon>
        <taxon>NPAAA clade</taxon>
        <taxon>indigoferoid/millettioid clade</taxon>
        <taxon>Phaseoleae</taxon>
        <taxon>Phaseolus</taxon>
    </lineage>
</organism>
<proteinExistence type="inferred from homology"/>
<name>RR2_PHAVU</name>
<keyword id="KW-0150">Chloroplast</keyword>
<keyword id="KW-0934">Plastid</keyword>
<keyword id="KW-0687">Ribonucleoprotein</keyword>
<keyword id="KW-0689">Ribosomal protein</keyword>
<evidence type="ECO:0000305" key="1"/>
<gene>
    <name type="primary">rps2</name>
</gene>
<reference key="1">
    <citation type="journal article" date="2007" name="BMC Genomics">
        <title>Rapid evolutionary change of common bean (Phaseolus vulgaris L) plastome, and the genomic diversification of legume chloroplasts.</title>
        <authorList>
            <person name="Guo X."/>
            <person name="Castillo-Ramirez S."/>
            <person name="Gonzalez V."/>
            <person name="Bustos P."/>
            <person name="Fernandez-Vazquez J.L."/>
            <person name="Santamaria R.I."/>
            <person name="Arellano J."/>
            <person name="Cevallos M.A."/>
            <person name="Davila G."/>
        </authorList>
    </citation>
    <scope>NUCLEOTIDE SEQUENCE [LARGE SCALE GENOMIC DNA]</scope>
    <source>
        <strain>cv. Negro Jamapa</strain>
    </source>
</reference>
<reference key="2">
    <citation type="submission" date="2007-10" db="EMBL/GenBank/DDBJ databases">
        <title>Complete nucleotide sequence of the plastid genome of the common bean, Phaseolus vulgaris.</title>
        <authorList>
            <person name="Moore M.J."/>
            <person name="Triplett E.W."/>
            <person name="Broughton W.J."/>
            <person name="Soltis P.S."/>
            <person name="Soltis D.E."/>
        </authorList>
    </citation>
    <scope>NUCLEOTIDE SEQUENCE [LARGE SCALE GENOMIC DNA]</scope>
</reference>
<comment type="subcellular location">
    <subcellularLocation>
        <location>Plastid</location>
        <location>Chloroplast</location>
    </subcellularLocation>
</comment>
<comment type="similarity">
    <text evidence="1">Belongs to the universal ribosomal protein uS2 family.</text>
</comment>
<sequence>MTKRYWNIILEEMMEAGVHFGHGTRKWNPKMSPYISANRKGIHITNLIRTARFLSESCDLVFHAASGGKQFLIVGTKKKAADSVARAAIRARCHYVNKKWLGGMLTNWYTTKTRLQKFRDLRMQQKTGRFDCFPKKDAAILKRHLAQLETYLGGIKYMKGLPDIVIIIDQQEEYTALRECITLEIPTICLIDTNSDPDLADISIPANDDAIASIRFILNKLVFAICEGRSRSIRNS</sequence>
<geneLocation type="chloroplast"/>
<feature type="chain" id="PRO_0000352148" description="Small ribosomal subunit protein uS2c">
    <location>
        <begin position="1"/>
        <end position="236"/>
    </location>
</feature>
<protein>
    <recommendedName>
        <fullName evidence="1">Small ribosomal subunit protein uS2c</fullName>
    </recommendedName>
    <alternativeName>
        <fullName>30S ribosomal protein S2, chloroplastic</fullName>
    </alternativeName>
</protein>
<dbReference type="EMBL" id="DQ886273">
    <property type="protein sequence ID" value="ABH88089.1"/>
    <property type="molecule type" value="Genomic_DNA"/>
</dbReference>
<dbReference type="EMBL" id="EU196765">
    <property type="protein sequence ID" value="ABW22779.1"/>
    <property type="molecule type" value="Genomic_DNA"/>
</dbReference>
<dbReference type="RefSeq" id="YP_001122809.1">
    <property type="nucleotide sequence ID" value="NC_009259.1"/>
</dbReference>
<dbReference type="SMR" id="A4GGA8"/>
<dbReference type="GeneID" id="4961799"/>
<dbReference type="KEGG" id="pvu:4961799"/>
<dbReference type="eggNOG" id="KOG0832">
    <property type="taxonomic scope" value="Eukaryota"/>
</dbReference>
<dbReference type="GO" id="GO:0009507">
    <property type="term" value="C:chloroplast"/>
    <property type="evidence" value="ECO:0007669"/>
    <property type="project" value="UniProtKB-SubCell"/>
</dbReference>
<dbReference type="GO" id="GO:0005763">
    <property type="term" value="C:mitochondrial small ribosomal subunit"/>
    <property type="evidence" value="ECO:0007669"/>
    <property type="project" value="TreeGrafter"/>
</dbReference>
<dbReference type="GO" id="GO:0003735">
    <property type="term" value="F:structural constituent of ribosome"/>
    <property type="evidence" value="ECO:0007669"/>
    <property type="project" value="InterPro"/>
</dbReference>
<dbReference type="GO" id="GO:0006412">
    <property type="term" value="P:translation"/>
    <property type="evidence" value="ECO:0007669"/>
    <property type="project" value="UniProtKB-UniRule"/>
</dbReference>
<dbReference type="CDD" id="cd01425">
    <property type="entry name" value="RPS2"/>
    <property type="match status" value="1"/>
</dbReference>
<dbReference type="FunFam" id="1.10.287.610:FF:000001">
    <property type="entry name" value="30S ribosomal protein S2"/>
    <property type="match status" value="1"/>
</dbReference>
<dbReference type="Gene3D" id="3.40.50.10490">
    <property type="entry name" value="Glucose-6-phosphate isomerase like protein, domain 1"/>
    <property type="match status" value="1"/>
</dbReference>
<dbReference type="Gene3D" id="1.10.287.610">
    <property type="entry name" value="Helix hairpin bin"/>
    <property type="match status" value="1"/>
</dbReference>
<dbReference type="HAMAP" id="MF_00291_B">
    <property type="entry name" value="Ribosomal_uS2_B"/>
    <property type="match status" value="1"/>
</dbReference>
<dbReference type="InterPro" id="IPR001865">
    <property type="entry name" value="Ribosomal_uS2"/>
</dbReference>
<dbReference type="InterPro" id="IPR005706">
    <property type="entry name" value="Ribosomal_uS2_bac/mit/plastid"/>
</dbReference>
<dbReference type="InterPro" id="IPR018130">
    <property type="entry name" value="Ribosomal_uS2_CS"/>
</dbReference>
<dbReference type="InterPro" id="IPR023591">
    <property type="entry name" value="Ribosomal_uS2_flav_dom_sf"/>
</dbReference>
<dbReference type="NCBIfam" id="TIGR01011">
    <property type="entry name" value="rpsB_bact"/>
    <property type="match status" value="1"/>
</dbReference>
<dbReference type="PANTHER" id="PTHR12534">
    <property type="entry name" value="30S RIBOSOMAL PROTEIN S2 PROKARYOTIC AND ORGANELLAR"/>
    <property type="match status" value="1"/>
</dbReference>
<dbReference type="PANTHER" id="PTHR12534:SF0">
    <property type="entry name" value="SMALL RIBOSOMAL SUBUNIT PROTEIN US2M"/>
    <property type="match status" value="1"/>
</dbReference>
<dbReference type="Pfam" id="PF00318">
    <property type="entry name" value="Ribosomal_S2"/>
    <property type="match status" value="1"/>
</dbReference>
<dbReference type="PRINTS" id="PR00395">
    <property type="entry name" value="RIBOSOMALS2"/>
</dbReference>
<dbReference type="SUPFAM" id="SSF52313">
    <property type="entry name" value="Ribosomal protein S2"/>
    <property type="match status" value="1"/>
</dbReference>
<dbReference type="PROSITE" id="PS00962">
    <property type="entry name" value="RIBOSOMAL_S2_1"/>
    <property type="match status" value="1"/>
</dbReference>
<accession>A4GGA8</accession>